<comment type="function">
    <text evidence="2">Catalyzes the first step of diphthamide biosynthesis, a post-translational modification of histidine which occurs in elongation factor 2. DPH1 and DPH2 transfer a 3-amino-3-carboxypropyl (ACP) group from S-adenosyl-L-methionine (SAM) to a histidine residue, the reaction is assisted by a reduction system comprising DPH3 and a NADH-dependent reductase, predominantly CBR1.</text>
</comment>
<comment type="catalytic activity">
    <reaction evidence="2">
        <text>L-histidyl-[translation elongation factor 2] + S-adenosyl-L-methionine = 2-[(3S)-amino-3-carboxypropyl]-L-histidyl-[translation elongation factor 2] + S-methyl-5'-thioadenosine + H(+)</text>
        <dbReference type="Rhea" id="RHEA:36783"/>
        <dbReference type="Rhea" id="RHEA-COMP:9748"/>
        <dbReference type="Rhea" id="RHEA-COMP:9749"/>
        <dbReference type="ChEBI" id="CHEBI:15378"/>
        <dbReference type="ChEBI" id="CHEBI:17509"/>
        <dbReference type="ChEBI" id="CHEBI:29979"/>
        <dbReference type="ChEBI" id="CHEBI:59789"/>
        <dbReference type="ChEBI" id="CHEBI:73995"/>
        <dbReference type="EC" id="2.5.1.108"/>
    </reaction>
</comment>
<comment type="cofactor">
    <cofactor evidence="2">
        <name>[4Fe-4S] cluster</name>
        <dbReference type="ChEBI" id="CHEBI:49883"/>
    </cofactor>
    <text evidence="2">Binds 1 [4Fe-4S] cluster per subunit. The cluster is coordinated with 3 cysteines and an exchangeable S-adenosyl-L-methionine.</text>
</comment>
<comment type="pathway">
    <text>Protein modification; peptidyl-diphthamide biosynthesis.</text>
</comment>
<comment type="subunit">
    <text evidence="2">Component of the 2-(3-amino-3-carboxypropyl)histidine synthase complex composed of DPH1, DPH2, DPH3 and a NADH-dependent reductase, predominantly CBR1.</text>
</comment>
<comment type="subcellular location">
    <subcellularLocation>
        <location evidence="2">Cytoplasm</location>
    </subcellularLocation>
</comment>
<comment type="similarity">
    <text evidence="3">Belongs to the DPH1/DPH2 family. DPH1 subfamily.</text>
</comment>
<accession>Q75AZ9</accession>
<organism>
    <name type="scientific">Eremothecium gossypii (strain ATCC 10895 / CBS 109.51 / FGSC 9923 / NRRL Y-1056)</name>
    <name type="common">Yeast</name>
    <name type="synonym">Ashbya gossypii</name>
    <dbReference type="NCBI Taxonomy" id="284811"/>
    <lineage>
        <taxon>Eukaryota</taxon>
        <taxon>Fungi</taxon>
        <taxon>Dikarya</taxon>
        <taxon>Ascomycota</taxon>
        <taxon>Saccharomycotina</taxon>
        <taxon>Saccharomycetes</taxon>
        <taxon>Saccharomycetales</taxon>
        <taxon>Saccharomycetaceae</taxon>
        <taxon>Eremothecium</taxon>
    </lineage>
</organism>
<protein>
    <recommendedName>
        <fullName evidence="3">2-(3-amino-3-carboxypropyl)histidine synthase subunit 1</fullName>
        <ecNumber evidence="2">2.5.1.108</ecNumber>
    </recommendedName>
    <alternativeName>
        <fullName>Diphthamide biosynthesis protein 1</fullName>
    </alternativeName>
    <alternativeName>
        <fullName evidence="3">Diphtheria toxin resistance protein 1</fullName>
    </alternativeName>
    <alternativeName>
        <fullName evidence="3">S-adenosyl-L-methionine:L-histidine 3-amino-3-carboxypropyltransferase 1</fullName>
    </alternativeName>
</protein>
<dbReference type="EC" id="2.5.1.108" evidence="2"/>
<dbReference type="EMBL" id="AE016817">
    <property type="protein sequence ID" value="AAS51691.1"/>
    <property type="molecule type" value="Genomic_DNA"/>
</dbReference>
<dbReference type="RefSeq" id="NP_983867.1">
    <property type="nucleotide sequence ID" value="NM_209220.1"/>
</dbReference>
<dbReference type="SMR" id="Q75AZ9"/>
<dbReference type="FunCoup" id="Q75AZ9">
    <property type="interactions" value="651"/>
</dbReference>
<dbReference type="STRING" id="284811.Q75AZ9"/>
<dbReference type="EnsemblFungi" id="AAS51691">
    <property type="protein sequence ID" value="AAS51691"/>
    <property type="gene ID" value="AGOS_ADL229W"/>
</dbReference>
<dbReference type="GeneID" id="4620002"/>
<dbReference type="KEGG" id="ago:AGOS_ADL229W"/>
<dbReference type="eggNOG" id="KOG2648">
    <property type="taxonomic scope" value="Eukaryota"/>
</dbReference>
<dbReference type="HOGENOM" id="CLU_037146_1_1_1"/>
<dbReference type="InParanoid" id="Q75AZ9"/>
<dbReference type="OMA" id="PGQVLGC"/>
<dbReference type="OrthoDB" id="1649088at2759"/>
<dbReference type="UniPathway" id="UPA00559"/>
<dbReference type="Proteomes" id="UP000000591">
    <property type="component" value="Chromosome IV"/>
</dbReference>
<dbReference type="GO" id="GO:0120513">
    <property type="term" value="C:2-(3-amino-3-carboxypropyl)histidine synthase complex"/>
    <property type="evidence" value="ECO:0000250"/>
    <property type="project" value="UniProtKB"/>
</dbReference>
<dbReference type="GO" id="GO:0005737">
    <property type="term" value="C:cytoplasm"/>
    <property type="evidence" value="ECO:0007669"/>
    <property type="project" value="UniProtKB-SubCell"/>
</dbReference>
<dbReference type="GO" id="GO:0090560">
    <property type="term" value="F:2-(3-amino-3-carboxypropyl)histidine synthase activity"/>
    <property type="evidence" value="ECO:0007669"/>
    <property type="project" value="UniProtKB-EC"/>
</dbReference>
<dbReference type="GO" id="GO:0051539">
    <property type="term" value="F:4 iron, 4 sulfur cluster binding"/>
    <property type="evidence" value="ECO:0000250"/>
    <property type="project" value="UniProtKB"/>
</dbReference>
<dbReference type="GO" id="GO:0046872">
    <property type="term" value="F:metal ion binding"/>
    <property type="evidence" value="ECO:0007669"/>
    <property type="project" value="UniProtKB-KW"/>
</dbReference>
<dbReference type="GO" id="GO:0017183">
    <property type="term" value="P:protein histidyl modification to diphthamide"/>
    <property type="evidence" value="ECO:0000250"/>
    <property type="project" value="UniProtKB"/>
</dbReference>
<dbReference type="FunFam" id="3.40.50.11840:FF:000001">
    <property type="entry name" value="2-(3-amino-3-carboxypropyl)histidine synthase subunit 1"/>
    <property type="match status" value="1"/>
</dbReference>
<dbReference type="FunFam" id="3.40.50.11850:FF:000001">
    <property type="entry name" value="2-(3-amino-3-carboxypropyl)histidine synthase subunit 1"/>
    <property type="match status" value="1"/>
</dbReference>
<dbReference type="FunFam" id="3.40.50.11860:FF:000002">
    <property type="entry name" value="2-(3-amino-3-carboxypropyl)histidine synthase subunit 1"/>
    <property type="match status" value="1"/>
</dbReference>
<dbReference type="Gene3D" id="3.40.50.11840">
    <property type="entry name" value="Diphthamide synthesis DPH1/DPH2 domain 1"/>
    <property type="match status" value="1"/>
</dbReference>
<dbReference type="Gene3D" id="3.40.50.11850">
    <property type="entry name" value="Diphthamide synthesis DPH1/DPH2 domain 2"/>
    <property type="match status" value="1"/>
</dbReference>
<dbReference type="Gene3D" id="3.40.50.11860">
    <property type="entry name" value="Diphthamide synthesis DPH1/DPH2 domain 3"/>
    <property type="match status" value="1"/>
</dbReference>
<dbReference type="InterPro" id="IPR016435">
    <property type="entry name" value="DPH1/DPH2"/>
</dbReference>
<dbReference type="InterPro" id="IPR042263">
    <property type="entry name" value="DPH1/DPH2_1"/>
</dbReference>
<dbReference type="InterPro" id="IPR042264">
    <property type="entry name" value="DPH1/DPH2_2"/>
</dbReference>
<dbReference type="InterPro" id="IPR042265">
    <property type="entry name" value="DPH1/DPH2_3"/>
</dbReference>
<dbReference type="InterPro" id="IPR035435">
    <property type="entry name" value="DPH1/DPH2_euk_archaea"/>
</dbReference>
<dbReference type="NCBIfam" id="TIGR00322">
    <property type="entry name" value="diphth2_R"/>
    <property type="match status" value="1"/>
</dbReference>
<dbReference type="PANTHER" id="PTHR10762:SF1">
    <property type="entry name" value="2-(3-AMINO-3-CARBOXYPROPYL)HISTIDINE SYNTHASE SUBUNIT 1"/>
    <property type="match status" value="1"/>
</dbReference>
<dbReference type="PANTHER" id="PTHR10762">
    <property type="entry name" value="DIPHTHAMIDE BIOSYNTHESIS PROTEIN"/>
    <property type="match status" value="1"/>
</dbReference>
<dbReference type="Pfam" id="PF01866">
    <property type="entry name" value="Diphthamide_syn"/>
    <property type="match status" value="1"/>
</dbReference>
<dbReference type="PIRSF" id="PIRSF004967">
    <property type="entry name" value="DPH1"/>
    <property type="match status" value="1"/>
</dbReference>
<dbReference type="SFLD" id="SFLDG01121">
    <property type="entry name" value="Diphthamide_biosynthesis"/>
    <property type="match status" value="1"/>
</dbReference>
<dbReference type="SFLD" id="SFLDS00032">
    <property type="entry name" value="Radical_SAM_3-amino-3-carboxyp"/>
    <property type="match status" value="1"/>
</dbReference>
<feature type="chain" id="PRO_0000083367" description="2-(3-amino-3-carboxypropyl)histidine synthase subunit 1">
    <location>
        <begin position="1"/>
        <end position="426"/>
    </location>
</feature>
<feature type="binding site" evidence="1">
    <location>
        <position position="133"/>
    </location>
    <ligand>
        <name>[4Fe-4S] cluster</name>
        <dbReference type="ChEBI" id="CHEBI:49883"/>
    </ligand>
</feature>
<feature type="binding site" evidence="1">
    <location>
        <position position="239"/>
    </location>
    <ligand>
        <name>[4Fe-4S] cluster</name>
        <dbReference type="ChEBI" id="CHEBI:49883"/>
    </ligand>
</feature>
<feature type="binding site" evidence="1">
    <location>
        <position position="368"/>
    </location>
    <ligand>
        <name>[4Fe-4S] cluster</name>
        <dbReference type="ChEBI" id="CHEBI:49883"/>
    </ligand>
</feature>
<proteinExistence type="inferred from homology"/>
<keyword id="KW-0963">Cytoplasm</keyword>
<keyword id="KW-0408">Iron</keyword>
<keyword id="KW-0411">Iron-sulfur</keyword>
<keyword id="KW-0479">Metal-binding</keyword>
<keyword id="KW-1185">Reference proteome</keyword>
<keyword id="KW-0949">S-adenosyl-L-methionine</keyword>
<keyword id="KW-0808">Transferase</keyword>
<reference key="1">
    <citation type="journal article" date="2004" name="Science">
        <title>The Ashbya gossypii genome as a tool for mapping the ancient Saccharomyces cerevisiae genome.</title>
        <authorList>
            <person name="Dietrich F.S."/>
            <person name="Voegeli S."/>
            <person name="Brachat S."/>
            <person name="Lerch A."/>
            <person name="Gates K."/>
            <person name="Steiner S."/>
            <person name="Mohr C."/>
            <person name="Poehlmann R."/>
            <person name="Luedi P."/>
            <person name="Choi S."/>
            <person name="Wing R.A."/>
            <person name="Flavier A."/>
            <person name="Gaffney T.D."/>
            <person name="Philippsen P."/>
        </authorList>
    </citation>
    <scope>NUCLEOTIDE SEQUENCE [LARGE SCALE GENOMIC DNA]</scope>
    <source>
        <strain>ATCC 10895 / CBS 109.51 / FGSC 9923 / NRRL Y-1056</strain>
    </source>
</reference>
<reference key="2">
    <citation type="journal article" date="2013" name="G3 (Bethesda)">
        <title>Genomes of Ashbya fungi isolated from insects reveal four mating-type loci, numerous translocations, lack of transposons, and distinct gene duplications.</title>
        <authorList>
            <person name="Dietrich F.S."/>
            <person name="Voegeli S."/>
            <person name="Kuo S."/>
            <person name="Philippsen P."/>
        </authorList>
    </citation>
    <scope>GENOME REANNOTATION</scope>
    <source>
        <strain>ATCC 10895 / CBS 109.51 / FGSC 9923 / NRRL Y-1056</strain>
    </source>
</reference>
<name>DPH1_EREGS</name>
<gene>
    <name type="primary">DPH1</name>
    <name type="ordered locus">ADL229W</name>
</gene>
<evidence type="ECO:0000250" key="1">
    <source>
        <dbReference type="UniProtKB" id="O58832"/>
    </source>
</evidence>
<evidence type="ECO:0000250" key="2">
    <source>
        <dbReference type="UniProtKB" id="P40487"/>
    </source>
</evidence>
<evidence type="ECO:0000305" key="3"/>
<sequence>MSTADEVTKKPRRRFVGVSRGENKVSTKQVSGDEAKELVRSAKSNTGARRAINQIPDEILNDENLQEAIKLLPSNYNFEIHKTVWNIRKHNAKRVALQMPEGLLIYSLVISDILEQFCNCETVVMGDVSYGACCIDDFTARALGCDFIVHYAHSCLVPVDVTSIKILYVFVTIGIDEDHLMKTLQKNFAKGTSLAVFGTIQFNPAIHSIREKLLYSESHMLYITPPQIKPLSKGEVLGCTSQRLPKEQFAAMVYVGDGRFHLESAMIHNPDIPAFRYDPYSRKFTRETYDQHQLVEVRSSAIEKARNSQCFGLILGALGRQGNLATVANLEKKLRAAGKKVVRIILSEIFPQKLAMFDHIDAFVQVACPRLSIDWGYAFNKPLLTPYETNVMLGQDRMFNEKYYPMDYYEVNGYGRGKQPTHDNVI</sequence>